<comment type="function">
    <text evidence="1">Catalyzes the reduction of the glycolytic intermediate dihydroxyacetone phosphate (DHAP) to sn-glycerol 3-phosphate (G3P), the key precursor for phospholipid synthesis.</text>
</comment>
<comment type="catalytic activity">
    <reaction evidence="1">
        <text>sn-glycerol 3-phosphate + NAD(+) = dihydroxyacetone phosphate + NADH + H(+)</text>
        <dbReference type="Rhea" id="RHEA:11092"/>
        <dbReference type="ChEBI" id="CHEBI:15378"/>
        <dbReference type="ChEBI" id="CHEBI:57540"/>
        <dbReference type="ChEBI" id="CHEBI:57597"/>
        <dbReference type="ChEBI" id="CHEBI:57642"/>
        <dbReference type="ChEBI" id="CHEBI:57945"/>
        <dbReference type="EC" id="1.1.1.94"/>
    </reaction>
    <physiologicalReaction direction="right-to-left" evidence="1">
        <dbReference type="Rhea" id="RHEA:11094"/>
    </physiologicalReaction>
</comment>
<comment type="catalytic activity">
    <reaction evidence="1">
        <text>sn-glycerol 3-phosphate + NADP(+) = dihydroxyacetone phosphate + NADPH + H(+)</text>
        <dbReference type="Rhea" id="RHEA:11096"/>
        <dbReference type="ChEBI" id="CHEBI:15378"/>
        <dbReference type="ChEBI" id="CHEBI:57597"/>
        <dbReference type="ChEBI" id="CHEBI:57642"/>
        <dbReference type="ChEBI" id="CHEBI:57783"/>
        <dbReference type="ChEBI" id="CHEBI:58349"/>
        <dbReference type="EC" id="1.1.1.94"/>
    </reaction>
    <physiologicalReaction direction="right-to-left" evidence="1">
        <dbReference type="Rhea" id="RHEA:11098"/>
    </physiologicalReaction>
</comment>
<comment type="pathway">
    <text evidence="1">Membrane lipid metabolism; glycerophospholipid metabolism.</text>
</comment>
<comment type="subcellular location">
    <subcellularLocation>
        <location evidence="1">Cytoplasm</location>
    </subcellularLocation>
</comment>
<comment type="similarity">
    <text evidence="1">Belongs to the NAD-dependent glycerol-3-phosphate dehydrogenase family.</text>
</comment>
<name>GPDA_ACIBT</name>
<organism>
    <name type="scientific">Acinetobacter baumannii (strain ATCC 17978 / DSM 105126 / CIP 53.77 / LMG 1025 / NCDC KC755 / 5377)</name>
    <dbReference type="NCBI Taxonomy" id="400667"/>
    <lineage>
        <taxon>Bacteria</taxon>
        <taxon>Pseudomonadati</taxon>
        <taxon>Pseudomonadota</taxon>
        <taxon>Gammaproteobacteria</taxon>
        <taxon>Moraxellales</taxon>
        <taxon>Moraxellaceae</taxon>
        <taxon>Acinetobacter</taxon>
        <taxon>Acinetobacter calcoaceticus/baumannii complex</taxon>
    </lineage>
</organism>
<protein>
    <recommendedName>
        <fullName evidence="1">Glycerol-3-phosphate dehydrogenase [NAD(P)+]</fullName>
        <ecNumber evidence="1">1.1.1.94</ecNumber>
    </recommendedName>
    <alternativeName>
        <fullName evidence="1">NAD(P)(+)-dependent glycerol-3-phosphate dehydrogenase</fullName>
    </alternativeName>
    <alternativeName>
        <fullName evidence="1">NAD(P)H-dependent dihydroxyacetone-phosphate reductase</fullName>
    </alternativeName>
</protein>
<dbReference type="EC" id="1.1.1.94" evidence="1"/>
<dbReference type="EMBL" id="CP000521">
    <property type="protein sequence ID" value="ABO12680.2"/>
    <property type="molecule type" value="Genomic_DNA"/>
</dbReference>
<dbReference type="RefSeq" id="WP_000807316.1">
    <property type="nucleotide sequence ID" value="NZ_CP053098.1"/>
</dbReference>
<dbReference type="SMR" id="A3M6Y6"/>
<dbReference type="KEGG" id="acb:A1S_2257"/>
<dbReference type="HOGENOM" id="CLU_033449_0_2_6"/>
<dbReference type="UniPathway" id="UPA00940"/>
<dbReference type="GO" id="GO:0005829">
    <property type="term" value="C:cytosol"/>
    <property type="evidence" value="ECO:0007669"/>
    <property type="project" value="TreeGrafter"/>
</dbReference>
<dbReference type="GO" id="GO:0047952">
    <property type="term" value="F:glycerol-3-phosphate dehydrogenase [NAD(P)+] activity"/>
    <property type="evidence" value="ECO:0007669"/>
    <property type="project" value="UniProtKB-UniRule"/>
</dbReference>
<dbReference type="GO" id="GO:0051287">
    <property type="term" value="F:NAD binding"/>
    <property type="evidence" value="ECO:0007669"/>
    <property type="project" value="InterPro"/>
</dbReference>
<dbReference type="GO" id="GO:0005975">
    <property type="term" value="P:carbohydrate metabolic process"/>
    <property type="evidence" value="ECO:0007669"/>
    <property type="project" value="InterPro"/>
</dbReference>
<dbReference type="GO" id="GO:0046167">
    <property type="term" value="P:glycerol-3-phosphate biosynthetic process"/>
    <property type="evidence" value="ECO:0007669"/>
    <property type="project" value="UniProtKB-UniRule"/>
</dbReference>
<dbReference type="GO" id="GO:0046168">
    <property type="term" value="P:glycerol-3-phosphate catabolic process"/>
    <property type="evidence" value="ECO:0007669"/>
    <property type="project" value="InterPro"/>
</dbReference>
<dbReference type="GO" id="GO:0046474">
    <property type="term" value="P:glycerophospholipid biosynthetic process"/>
    <property type="evidence" value="ECO:0007669"/>
    <property type="project" value="TreeGrafter"/>
</dbReference>
<dbReference type="FunFam" id="1.10.1040.10:FF:000001">
    <property type="entry name" value="Glycerol-3-phosphate dehydrogenase [NAD(P)+]"/>
    <property type="match status" value="1"/>
</dbReference>
<dbReference type="FunFam" id="3.40.50.720:FF:000019">
    <property type="entry name" value="Glycerol-3-phosphate dehydrogenase [NAD(P)+]"/>
    <property type="match status" value="1"/>
</dbReference>
<dbReference type="Gene3D" id="1.10.1040.10">
    <property type="entry name" value="N-(1-d-carboxylethyl)-l-norvaline Dehydrogenase, domain 2"/>
    <property type="match status" value="1"/>
</dbReference>
<dbReference type="Gene3D" id="3.40.50.720">
    <property type="entry name" value="NAD(P)-binding Rossmann-like Domain"/>
    <property type="match status" value="1"/>
</dbReference>
<dbReference type="HAMAP" id="MF_00394">
    <property type="entry name" value="NAD_Glyc3P_dehydrog"/>
    <property type="match status" value="1"/>
</dbReference>
<dbReference type="InterPro" id="IPR008927">
    <property type="entry name" value="6-PGluconate_DH-like_C_sf"/>
</dbReference>
<dbReference type="InterPro" id="IPR013328">
    <property type="entry name" value="6PGD_dom2"/>
</dbReference>
<dbReference type="InterPro" id="IPR006168">
    <property type="entry name" value="G3P_DH_NAD-dep"/>
</dbReference>
<dbReference type="InterPro" id="IPR006109">
    <property type="entry name" value="G3P_DH_NAD-dep_C"/>
</dbReference>
<dbReference type="InterPro" id="IPR011128">
    <property type="entry name" value="G3P_DH_NAD-dep_N"/>
</dbReference>
<dbReference type="InterPro" id="IPR036291">
    <property type="entry name" value="NAD(P)-bd_dom_sf"/>
</dbReference>
<dbReference type="NCBIfam" id="NF000940">
    <property type="entry name" value="PRK00094.1-2"/>
    <property type="match status" value="1"/>
</dbReference>
<dbReference type="NCBIfam" id="NF000942">
    <property type="entry name" value="PRK00094.1-4"/>
    <property type="match status" value="1"/>
</dbReference>
<dbReference type="NCBIfam" id="NF000944">
    <property type="entry name" value="PRK00094.2-2"/>
    <property type="match status" value="1"/>
</dbReference>
<dbReference type="NCBIfam" id="NF000946">
    <property type="entry name" value="PRK00094.2-4"/>
    <property type="match status" value="1"/>
</dbReference>
<dbReference type="PANTHER" id="PTHR11728">
    <property type="entry name" value="GLYCEROL-3-PHOSPHATE DEHYDROGENASE"/>
    <property type="match status" value="1"/>
</dbReference>
<dbReference type="PANTHER" id="PTHR11728:SF1">
    <property type="entry name" value="GLYCEROL-3-PHOSPHATE DEHYDROGENASE [NAD(+)] 2, CHLOROPLASTIC"/>
    <property type="match status" value="1"/>
</dbReference>
<dbReference type="Pfam" id="PF07479">
    <property type="entry name" value="NAD_Gly3P_dh_C"/>
    <property type="match status" value="1"/>
</dbReference>
<dbReference type="Pfam" id="PF01210">
    <property type="entry name" value="NAD_Gly3P_dh_N"/>
    <property type="match status" value="1"/>
</dbReference>
<dbReference type="PIRSF" id="PIRSF000114">
    <property type="entry name" value="Glycerol-3-P_dh"/>
    <property type="match status" value="1"/>
</dbReference>
<dbReference type="PRINTS" id="PR00077">
    <property type="entry name" value="GPDHDRGNASE"/>
</dbReference>
<dbReference type="SUPFAM" id="SSF48179">
    <property type="entry name" value="6-phosphogluconate dehydrogenase C-terminal domain-like"/>
    <property type="match status" value="1"/>
</dbReference>
<dbReference type="SUPFAM" id="SSF51735">
    <property type="entry name" value="NAD(P)-binding Rossmann-fold domains"/>
    <property type="match status" value="1"/>
</dbReference>
<dbReference type="PROSITE" id="PS00957">
    <property type="entry name" value="NAD_G3PDH"/>
    <property type="match status" value="1"/>
</dbReference>
<feature type="chain" id="PRO_1000123109" description="Glycerol-3-phosphate dehydrogenase [NAD(P)+]">
    <location>
        <begin position="1"/>
        <end position="357"/>
    </location>
</feature>
<feature type="active site" description="Proton acceptor" evidence="1">
    <location>
        <position position="207"/>
    </location>
</feature>
<feature type="binding site" evidence="1">
    <location>
        <position position="30"/>
    </location>
    <ligand>
        <name>NADPH</name>
        <dbReference type="ChEBI" id="CHEBI:57783"/>
    </ligand>
</feature>
<feature type="binding site" evidence="1">
    <location>
        <position position="31"/>
    </location>
    <ligand>
        <name>NADPH</name>
        <dbReference type="ChEBI" id="CHEBI:57783"/>
    </ligand>
</feature>
<feature type="binding site" evidence="1">
    <location>
        <position position="51"/>
    </location>
    <ligand>
        <name>NADPH</name>
        <dbReference type="ChEBI" id="CHEBI:57783"/>
    </ligand>
</feature>
<feature type="binding site" evidence="1">
    <location>
        <position position="124"/>
    </location>
    <ligand>
        <name>NADPH</name>
        <dbReference type="ChEBI" id="CHEBI:57783"/>
    </ligand>
</feature>
<feature type="binding site" evidence="1">
    <location>
        <position position="124"/>
    </location>
    <ligand>
        <name>sn-glycerol 3-phosphate</name>
        <dbReference type="ChEBI" id="CHEBI:57597"/>
    </ligand>
</feature>
<feature type="binding site" evidence="1">
    <location>
        <position position="152"/>
    </location>
    <ligand>
        <name>sn-glycerol 3-phosphate</name>
        <dbReference type="ChEBI" id="CHEBI:57597"/>
    </ligand>
</feature>
<feature type="binding site" evidence="1">
    <location>
        <position position="156"/>
    </location>
    <ligand>
        <name>NADPH</name>
        <dbReference type="ChEBI" id="CHEBI:57783"/>
    </ligand>
</feature>
<feature type="binding site" evidence="1">
    <location>
        <position position="207"/>
    </location>
    <ligand>
        <name>sn-glycerol 3-phosphate</name>
        <dbReference type="ChEBI" id="CHEBI:57597"/>
    </ligand>
</feature>
<feature type="binding site" evidence="1">
    <location>
        <position position="260"/>
    </location>
    <ligand>
        <name>sn-glycerol 3-phosphate</name>
        <dbReference type="ChEBI" id="CHEBI:57597"/>
    </ligand>
</feature>
<feature type="binding site" evidence="1">
    <location>
        <position position="270"/>
    </location>
    <ligand>
        <name>sn-glycerol 3-phosphate</name>
        <dbReference type="ChEBI" id="CHEBI:57597"/>
    </ligand>
</feature>
<feature type="binding site" evidence="1">
    <location>
        <position position="271"/>
    </location>
    <ligand>
        <name>NADPH</name>
        <dbReference type="ChEBI" id="CHEBI:57783"/>
    </ligand>
</feature>
<feature type="binding site" evidence="1">
    <location>
        <position position="271"/>
    </location>
    <ligand>
        <name>sn-glycerol 3-phosphate</name>
        <dbReference type="ChEBI" id="CHEBI:57597"/>
    </ligand>
</feature>
<feature type="binding site" evidence="1">
    <location>
        <position position="272"/>
    </location>
    <ligand>
        <name>sn-glycerol 3-phosphate</name>
        <dbReference type="ChEBI" id="CHEBI:57597"/>
    </ligand>
</feature>
<feature type="binding site" evidence="1">
    <location>
        <position position="297"/>
    </location>
    <ligand>
        <name>NADPH</name>
        <dbReference type="ChEBI" id="CHEBI:57783"/>
    </ligand>
</feature>
<keyword id="KW-0963">Cytoplasm</keyword>
<keyword id="KW-0444">Lipid biosynthesis</keyword>
<keyword id="KW-0443">Lipid metabolism</keyword>
<keyword id="KW-0520">NAD</keyword>
<keyword id="KW-0521">NADP</keyword>
<keyword id="KW-0547">Nucleotide-binding</keyword>
<keyword id="KW-0560">Oxidoreductase</keyword>
<keyword id="KW-0594">Phospholipid biosynthesis</keyword>
<keyword id="KW-1208">Phospholipid metabolism</keyword>
<reference key="1">
    <citation type="journal article" date="2007" name="Genes Dev.">
        <title>New insights into Acinetobacter baumannii pathogenesis revealed by high-density pyrosequencing and transposon mutagenesis.</title>
        <authorList>
            <person name="Smith M.G."/>
            <person name="Gianoulis T.A."/>
            <person name="Pukatzki S."/>
            <person name="Mekalanos J.J."/>
            <person name="Ornston L.N."/>
            <person name="Gerstein M."/>
            <person name="Snyder M."/>
        </authorList>
    </citation>
    <scope>NUCLEOTIDE SEQUENCE [LARGE SCALE GENOMIC DNA]</scope>
    <source>
        <strain>ATCC 17978 / DSM 105126 / CIP 53.77 / LMG 1025 / NCDC KC755 / 5377</strain>
    </source>
</reference>
<sequence length="357" mass="38536">MAEFKFTDLVEPVAVDKKTALRITVLGGGSFGTAMANLAARNGCDTMIWIRDAETAEEINKTHINKRYLPDFTLESSLRAVSDLEQAVCDRDIILVAIPSHSFRDVLKQIAPYITAQAVVSLTKGVEAKTFSFMSDIIREELPEVPYGVLSGPNLAKEIMAGMPSGTVIASDSELVRYAVQHALHSALFRVFGSDDVHGVELGGALKNIYAVAMGIGAAYKIGENTKSMILTRALAEMSRFAVKQGANPLTFLGLSGVGDLFATCNSPLSRNYQIGYALGSGKTLEQASKELGQTAEGINTIVQVRGKAQELDVYMPITNALYEVIFEGAPPLNIALSLMKNGHRSDVEFVLPHHEV</sequence>
<proteinExistence type="inferred from homology"/>
<accession>A3M6Y6</accession>
<evidence type="ECO:0000255" key="1">
    <source>
        <dbReference type="HAMAP-Rule" id="MF_00394"/>
    </source>
</evidence>
<gene>
    <name evidence="1" type="primary">gpsA</name>
    <name type="ordered locus">A1S_2257</name>
</gene>